<evidence type="ECO:0000250" key="1"/>
<evidence type="ECO:0000255" key="2"/>
<evidence type="ECO:0000255" key="3">
    <source>
        <dbReference type="PROSITE-ProRule" id="PRU00470"/>
    </source>
</evidence>
<evidence type="ECO:0000256" key="4">
    <source>
        <dbReference type="SAM" id="MobiDB-lite"/>
    </source>
</evidence>
<evidence type="ECO:0000269" key="5">
    <source>
    </source>
</evidence>
<evidence type="ECO:0000305" key="6"/>
<evidence type="ECO:0000305" key="7">
    <source>
    </source>
</evidence>
<organism>
    <name type="scientific">Oryza sativa subsp. japonica</name>
    <name type="common">Rice</name>
    <dbReference type="NCBI Taxonomy" id="39947"/>
    <lineage>
        <taxon>Eukaryota</taxon>
        <taxon>Viridiplantae</taxon>
        <taxon>Streptophyta</taxon>
        <taxon>Embryophyta</taxon>
        <taxon>Tracheophyta</taxon>
        <taxon>Spermatophyta</taxon>
        <taxon>Magnoliopsida</taxon>
        <taxon>Liliopsida</taxon>
        <taxon>Poales</taxon>
        <taxon>Poaceae</taxon>
        <taxon>BOP clade</taxon>
        <taxon>Oryzoideae</taxon>
        <taxon>Oryzeae</taxon>
        <taxon>Oryzinae</taxon>
        <taxon>Oryza</taxon>
        <taxon>Oryza sativa</taxon>
    </lineage>
</organism>
<accession>Q0JGI1</accession>
<accession>A3A115</accession>
<accession>Q5JJN7</accession>
<comment type="function">
    <text evidence="1">Trans-acting factor that binds specifically to the consensus nucleotide sequence 5'-TNCGTACAA-3' (By similarity). May be involved in panicle development.</text>
</comment>
<comment type="subcellular location">
    <subcellularLocation>
        <location evidence="6">Nucleus</location>
    </subcellularLocation>
</comment>
<comment type="tissue specificity">
    <text evidence="5">Expressed in stems, leaf sheaths, and young panicles.</text>
</comment>
<comment type="induction">
    <text evidence="7">Negatively regulated by microRNAs miR156b and miR156h.</text>
</comment>
<comment type="domain">
    <text evidence="1">The SBP-type zinc finger is required for the binding to DNA.</text>
</comment>
<comment type="sequence caution" evidence="6">
    <conflict type="erroneous gene model prediction">
        <sequence resource="EMBL-CDS" id="BAD88314"/>
    </conflict>
</comment>
<comment type="sequence caution" evidence="6">
    <conflict type="erroneous gene model prediction">
        <sequence resource="EMBL-CDS" id="BAF07147"/>
    </conflict>
</comment>
<feature type="chain" id="PRO_0000308224" description="Squamosa promoter-binding-like protein 2">
    <location>
        <begin position="1"/>
        <end position="412"/>
    </location>
</feature>
<feature type="zinc finger region" description="SBP-type" evidence="3">
    <location>
        <begin position="89"/>
        <end position="167"/>
    </location>
</feature>
<feature type="region of interest" description="Disordered" evidence="4">
    <location>
        <begin position="1"/>
        <end position="81"/>
    </location>
</feature>
<feature type="short sequence motif" description="Bipartite nuclear localization signal" evidence="2">
    <location>
        <begin position="150"/>
        <end position="166"/>
    </location>
</feature>
<feature type="compositionally biased region" description="Gly residues" evidence="4">
    <location>
        <begin position="18"/>
        <end position="31"/>
    </location>
</feature>
<feature type="compositionally biased region" description="Low complexity" evidence="4">
    <location>
        <begin position="48"/>
        <end position="57"/>
    </location>
</feature>
<feature type="compositionally biased region" description="Low complexity" evidence="4">
    <location>
        <begin position="67"/>
        <end position="81"/>
    </location>
</feature>
<feature type="binding site" evidence="3">
    <location>
        <position position="92"/>
    </location>
    <ligand>
        <name>Zn(2+)</name>
        <dbReference type="ChEBI" id="CHEBI:29105"/>
        <label>1</label>
    </ligand>
</feature>
<feature type="binding site" evidence="3">
    <location>
        <position position="97"/>
    </location>
    <ligand>
        <name>Zn(2+)</name>
        <dbReference type="ChEBI" id="CHEBI:29105"/>
        <label>1</label>
    </ligand>
</feature>
<feature type="binding site" evidence="3">
    <location>
        <position position="115"/>
    </location>
    <ligand>
        <name>Zn(2+)</name>
        <dbReference type="ChEBI" id="CHEBI:29105"/>
        <label>1</label>
    </ligand>
</feature>
<feature type="binding site" evidence="3">
    <location>
        <position position="118"/>
    </location>
    <ligand>
        <name>Zn(2+)</name>
        <dbReference type="ChEBI" id="CHEBI:29105"/>
        <label>1</label>
    </ligand>
</feature>
<feature type="binding site" evidence="3">
    <location>
        <position position="134"/>
    </location>
    <ligand>
        <name>Zn(2+)</name>
        <dbReference type="ChEBI" id="CHEBI:29105"/>
        <label>2</label>
    </ligand>
</feature>
<feature type="binding site" evidence="3">
    <location>
        <position position="137"/>
    </location>
    <ligand>
        <name>Zn(2+)</name>
        <dbReference type="ChEBI" id="CHEBI:29105"/>
        <label>2</label>
    </ligand>
</feature>
<feature type="binding site" evidence="3">
    <location>
        <position position="141"/>
    </location>
    <ligand>
        <name>Zn(2+)</name>
        <dbReference type="ChEBI" id="CHEBI:29105"/>
        <label>2</label>
    </ligand>
</feature>
<feature type="binding site" evidence="3">
    <location>
        <position position="153"/>
    </location>
    <ligand>
        <name>Zn(2+)</name>
        <dbReference type="ChEBI" id="CHEBI:29105"/>
        <label>2</label>
    </ligand>
</feature>
<reference key="1">
    <citation type="journal article" date="2002" name="Nature">
        <title>The genome sequence and structure of rice chromosome 1.</title>
        <authorList>
            <person name="Sasaki T."/>
            <person name="Matsumoto T."/>
            <person name="Yamamoto K."/>
            <person name="Sakata K."/>
            <person name="Baba T."/>
            <person name="Katayose Y."/>
            <person name="Wu J."/>
            <person name="Niimura Y."/>
            <person name="Cheng Z."/>
            <person name="Nagamura Y."/>
            <person name="Antonio B.A."/>
            <person name="Kanamori H."/>
            <person name="Hosokawa S."/>
            <person name="Masukawa M."/>
            <person name="Arikawa K."/>
            <person name="Chiden Y."/>
            <person name="Hayashi M."/>
            <person name="Okamoto M."/>
            <person name="Ando T."/>
            <person name="Aoki H."/>
            <person name="Arita K."/>
            <person name="Hamada M."/>
            <person name="Harada C."/>
            <person name="Hijishita S."/>
            <person name="Honda M."/>
            <person name="Ichikawa Y."/>
            <person name="Idonuma A."/>
            <person name="Iijima M."/>
            <person name="Ikeda M."/>
            <person name="Ikeno M."/>
            <person name="Ito S."/>
            <person name="Ito T."/>
            <person name="Ito Y."/>
            <person name="Ito Y."/>
            <person name="Iwabuchi A."/>
            <person name="Kamiya K."/>
            <person name="Karasawa W."/>
            <person name="Katagiri S."/>
            <person name="Kikuta A."/>
            <person name="Kobayashi N."/>
            <person name="Kono I."/>
            <person name="Machita K."/>
            <person name="Maehara T."/>
            <person name="Mizuno H."/>
            <person name="Mizubayashi T."/>
            <person name="Mukai Y."/>
            <person name="Nagasaki H."/>
            <person name="Nakashima M."/>
            <person name="Nakama Y."/>
            <person name="Nakamichi Y."/>
            <person name="Nakamura M."/>
            <person name="Namiki N."/>
            <person name="Negishi M."/>
            <person name="Ohta I."/>
            <person name="Ono N."/>
            <person name="Saji S."/>
            <person name="Sakai K."/>
            <person name="Shibata M."/>
            <person name="Shimokawa T."/>
            <person name="Shomura A."/>
            <person name="Song J."/>
            <person name="Takazaki Y."/>
            <person name="Terasawa K."/>
            <person name="Tsuji K."/>
            <person name="Waki K."/>
            <person name="Yamagata H."/>
            <person name="Yamane H."/>
            <person name="Yoshiki S."/>
            <person name="Yoshihara R."/>
            <person name="Yukawa K."/>
            <person name="Zhong H."/>
            <person name="Iwama H."/>
            <person name="Endo T."/>
            <person name="Ito H."/>
            <person name="Hahn J.H."/>
            <person name="Kim H.-I."/>
            <person name="Eun M.-Y."/>
            <person name="Yano M."/>
            <person name="Jiang J."/>
            <person name="Gojobori T."/>
        </authorList>
    </citation>
    <scope>NUCLEOTIDE SEQUENCE [LARGE SCALE GENOMIC DNA]</scope>
    <source>
        <strain>cv. Nipponbare</strain>
    </source>
</reference>
<reference key="2">
    <citation type="journal article" date="2005" name="Nature">
        <title>The map-based sequence of the rice genome.</title>
        <authorList>
            <consortium name="International rice genome sequencing project (IRGSP)"/>
        </authorList>
    </citation>
    <scope>NUCLEOTIDE SEQUENCE [LARGE SCALE GENOMIC DNA]</scope>
    <source>
        <strain>cv. Nipponbare</strain>
    </source>
</reference>
<reference key="3">
    <citation type="journal article" date="2008" name="Nucleic Acids Res.">
        <title>The rice annotation project database (RAP-DB): 2008 update.</title>
        <authorList>
            <consortium name="The rice annotation project (RAP)"/>
        </authorList>
    </citation>
    <scope>GENOME REANNOTATION</scope>
    <source>
        <strain>cv. Nipponbare</strain>
    </source>
</reference>
<reference key="4">
    <citation type="journal article" date="2013" name="Rice">
        <title>Improvement of the Oryza sativa Nipponbare reference genome using next generation sequence and optical map data.</title>
        <authorList>
            <person name="Kawahara Y."/>
            <person name="de la Bastide M."/>
            <person name="Hamilton J.P."/>
            <person name="Kanamori H."/>
            <person name="McCombie W.R."/>
            <person name="Ouyang S."/>
            <person name="Schwartz D.C."/>
            <person name="Tanaka T."/>
            <person name="Wu J."/>
            <person name="Zhou S."/>
            <person name="Childs K.L."/>
            <person name="Davidson R.M."/>
            <person name="Lin H."/>
            <person name="Quesada-Ocampo L."/>
            <person name="Vaillancourt B."/>
            <person name="Sakai H."/>
            <person name="Lee S.S."/>
            <person name="Kim J."/>
            <person name="Numa H."/>
            <person name="Itoh T."/>
            <person name="Buell C.R."/>
            <person name="Matsumoto T."/>
        </authorList>
    </citation>
    <scope>GENOME REANNOTATION</scope>
    <source>
        <strain>cv. Nipponbare</strain>
    </source>
</reference>
<reference key="5">
    <citation type="journal article" date="2005" name="PLoS Biol.">
        <title>The genomes of Oryza sativa: a history of duplications.</title>
        <authorList>
            <person name="Yu J."/>
            <person name="Wang J."/>
            <person name="Lin W."/>
            <person name="Li S."/>
            <person name="Li H."/>
            <person name="Zhou J."/>
            <person name="Ni P."/>
            <person name="Dong W."/>
            <person name="Hu S."/>
            <person name="Zeng C."/>
            <person name="Zhang J."/>
            <person name="Zhang Y."/>
            <person name="Li R."/>
            <person name="Xu Z."/>
            <person name="Li S."/>
            <person name="Li X."/>
            <person name="Zheng H."/>
            <person name="Cong L."/>
            <person name="Lin L."/>
            <person name="Yin J."/>
            <person name="Geng J."/>
            <person name="Li G."/>
            <person name="Shi J."/>
            <person name="Liu J."/>
            <person name="Lv H."/>
            <person name="Li J."/>
            <person name="Wang J."/>
            <person name="Deng Y."/>
            <person name="Ran L."/>
            <person name="Shi X."/>
            <person name="Wang X."/>
            <person name="Wu Q."/>
            <person name="Li C."/>
            <person name="Ren X."/>
            <person name="Wang J."/>
            <person name="Wang X."/>
            <person name="Li D."/>
            <person name="Liu D."/>
            <person name="Zhang X."/>
            <person name="Ji Z."/>
            <person name="Zhao W."/>
            <person name="Sun Y."/>
            <person name="Zhang Z."/>
            <person name="Bao J."/>
            <person name="Han Y."/>
            <person name="Dong L."/>
            <person name="Ji J."/>
            <person name="Chen P."/>
            <person name="Wu S."/>
            <person name="Liu J."/>
            <person name="Xiao Y."/>
            <person name="Bu D."/>
            <person name="Tan J."/>
            <person name="Yang L."/>
            <person name="Ye C."/>
            <person name="Zhang J."/>
            <person name="Xu J."/>
            <person name="Zhou Y."/>
            <person name="Yu Y."/>
            <person name="Zhang B."/>
            <person name="Zhuang S."/>
            <person name="Wei H."/>
            <person name="Liu B."/>
            <person name="Lei M."/>
            <person name="Yu H."/>
            <person name="Li Y."/>
            <person name="Xu H."/>
            <person name="Wei S."/>
            <person name="He X."/>
            <person name="Fang L."/>
            <person name="Zhang Z."/>
            <person name="Zhang Y."/>
            <person name="Huang X."/>
            <person name="Su Z."/>
            <person name="Tong W."/>
            <person name="Li J."/>
            <person name="Tong Z."/>
            <person name="Li S."/>
            <person name="Ye J."/>
            <person name="Wang L."/>
            <person name="Fang L."/>
            <person name="Lei T."/>
            <person name="Chen C.-S."/>
            <person name="Chen H.-C."/>
            <person name="Xu Z."/>
            <person name="Li H."/>
            <person name="Huang H."/>
            <person name="Zhang F."/>
            <person name="Xu H."/>
            <person name="Li N."/>
            <person name="Zhao C."/>
            <person name="Li S."/>
            <person name="Dong L."/>
            <person name="Huang Y."/>
            <person name="Li L."/>
            <person name="Xi Y."/>
            <person name="Qi Q."/>
            <person name="Li W."/>
            <person name="Zhang B."/>
            <person name="Hu W."/>
            <person name="Zhang Y."/>
            <person name="Tian X."/>
            <person name="Jiao Y."/>
            <person name="Liang X."/>
            <person name="Jin J."/>
            <person name="Gao L."/>
            <person name="Zheng W."/>
            <person name="Hao B."/>
            <person name="Liu S.-M."/>
            <person name="Wang W."/>
            <person name="Yuan L."/>
            <person name="Cao M."/>
            <person name="McDermott J."/>
            <person name="Samudrala R."/>
            <person name="Wang J."/>
            <person name="Wong G.K.-S."/>
            <person name="Yang H."/>
        </authorList>
    </citation>
    <scope>NUCLEOTIDE SEQUENCE [LARGE SCALE GENOMIC DNA]</scope>
    <source>
        <strain>cv. Nipponbare</strain>
    </source>
</reference>
<reference key="6">
    <citation type="journal article" date="2003" name="Science">
        <title>Collection, mapping, and annotation of over 28,000 cDNA clones from japonica rice.</title>
        <authorList>
            <consortium name="The rice full-length cDNA consortium"/>
        </authorList>
    </citation>
    <scope>NUCLEOTIDE SEQUENCE [LARGE SCALE MRNA] OF 102-412</scope>
    <source>
        <strain>cv. Nipponbare</strain>
    </source>
</reference>
<reference key="7">
    <citation type="journal article" date="2006" name="Plant Physiol.">
        <title>Genomic organization, differential expression, and interaction of SQUAMOSA promoter-binding-like transcription factors and microRNA156 in rice.</title>
        <authorList>
            <person name="Xie K."/>
            <person name="Wu C."/>
            <person name="Xiong L."/>
        </authorList>
    </citation>
    <scope>TISSUE SPECIFICITY</scope>
    <scope>INDUCTION</scope>
    <scope>GENE FAMILY</scope>
    <scope>NOMENCLATURE</scope>
</reference>
<reference key="8">
    <citation type="journal article" date="2008" name="Gene">
        <title>Comparative study of SBP-box gene family in Arabidopsis and rice.</title>
        <authorList>
            <person name="Yang Z."/>
            <person name="Wang X."/>
            <person name="Gu S."/>
            <person name="Hu Z."/>
            <person name="Xu H."/>
            <person name="Xu C."/>
        </authorList>
    </citation>
    <scope>GENE FAMILY</scope>
</reference>
<protein>
    <recommendedName>
        <fullName>Squamosa promoter-binding-like protein 2</fullName>
    </recommendedName>
</protein>
<sequence>MDWDAKMPSWDLGTVVGPSGGGGGGGGGGGALDLKLGAPTSWKTTTTVSAASAAPAAVAPPPPPPASSSSSAAAAGKRARAGQGQQAAVPACSVEGCAADLSKCVRDYHRRHKVCEAHSKTAVVTVAGQQQRFCQQCSRFHLLGEFDEEKRSCRKRLDGHNKRRRKPQPDPLNPGNLFANHHGAARFTSYPQIFSTAASMSPQETKWPANVVKTEAADVFQEPYYHALHLNGAGAAAAASIFHHGGNKARKHHFPFLTADHGGGAAAASPLFGCQPFTITPSSESRSSSSSRHSNGKMFAHDGGLDNCALSLLSDNPTPTAQITIPQPLFAGGGQYGGGGGGDVSLTGLSYVRMAGKDTSILAKSATTTATTATTPTTTSAQLQYHGYYHHHVSADQGSSDAAIQALPFSSW</sequence>
<keyword id="KW-0238">DNA-binding</keyword>
<keyword id="KW-0479">Metal-binding</keyword>
<keyword id="KW-0539">Nucleus</keyword>
<keyword id="KW-1185">Reference proteome</keyword>
<keyword id="KW-0804">Transcription</keyword>
<keyword id="KW-0805">Transcription regulation</keyword>
<keyword id="KW-0862">Zinc</keyword>
<keyword id="KW-0863">Zinc-finger</keyword>
<dbReference type="EMBL" id="AP006167">
    <property type="protein sequence ID" value="BAD88314.1"/>
    <property type="status" value="ALT_SEQ"/>
    <property type="molecule type" value="Genomic_DNA"/>
</dbReference>
<dbReference type="EMBL" id="AP008207">
    <property type="protein sequence ID" value="BAF07147.1"/>
    <property type="status" value="ALT_SEQ"/>
    <property type="molecule type" value="Genomic_DNA"/>
</dbReference>
<dbReference type="EMBL" id="AP014957">
    <property type="status" value="NOT_ANNOTATED_CDS"/>
    <property type="molecule type" value="Genomic_DNA"/>
</dbReference>
<dbReference type="EMBL" id="CM000138">
    <property type="protein sequence ID" value="EAZ14662.1"/>
    <property type="molecule type" value="Genomic_DNA"/>
</dbReference>
<dbReference type="EMBL" id="AK062581">
    <property type="status" value="NOT_ANNOTATED_CDS"/>
    <property type="molecule type" value="mRNA"/>
</dbReference>
<dbReference type="RefSeq" id="XP_015611358.1">
    <property type="nucleotide sequence ID" value="XM_015755872.1"/>
</dbReference>
<dbReference type="SMR" id="Q0JGI1"/>
<dbReference type="FunCoup" id="Q0JGI1">
    <property type="interactions" value="321"/>
</dbReference>
<dbReference type="STRING" id="39947.Q0JGI1"/>
<dbReference type="PaxDb" id="39947-Q0JGI1"/>
<dbReference type="KEGG" id="dosa:Os01g0922600"/>
<dbReference type="eggNOG" id="ENOG502QRGA">
    <property type="taxonomic scope" value="Eukaryota"/>
</dbReference>
<dbReference type="HOGENOM" id="CLU_042475_1_0_1"/>
<dbReference type="InParanoid" id="Q0JGI1"/>
<dbReference type="OrthoDB" id="514967at2759"/>
<dbReference type="Proteomes" id="UP000000763">
    <property type="component" value="Chromosome 1"/>
</dbReference>
<dbReference type="Proteomes" id="UP000007752">
    <property type="component" value="Chromosome 1"/>
</dbReference>
<dbReference type="Proteomes" id="UP000059680">
    <property type="component" value="Chromosome 1"/>
</dbReference>
<dbReference type="GO" id="GO:0005634">
    <property type="term" value="C:nucleus"/>
    <property type="evidence" value="ECO:0007669"/>
    <property type="project" value="UniProtKB-SubCell"/>
</dbReference>
<dbReference type="GO" id="GO:0003677">
    <property type="term" value="F:DNA binding"/>
    <property type="evidence" value="ECO:0007669"/>
    <property type="project" value="UniProtKB-KW"/>
</dbReference>
<dbReference type="GO" id="GO:0008270">
    <property type="term" value="F:zinc ion binding"/>
    <property type="evidence" value="ECO:0007669"/>
    <property type="project" value="UniProtKB-KW"/>
</dbReference>
<dbReference type="FunFam" id="4.10.1100.10:FF:000001">
    <property type="entry name" value="Squamosa promoter-binding-like protein 14"/>
    <property type="match status" value="1"/>
</dbReference>
<dbReference type="Gene3D" id="4.10.1100.10">
    <property type="entry name" value="Transcription factor, SBP-box domain"/>
    <property type="match status" value="1"/>
</dbReference>
<dbReference type="InterPro" id="IPR044817">
    <property type="entry name" value="SBP-like"/>
</dbReference>
<dbReference type="InterPro" id="IPR004333">
    <property type="entry name" value="SBP_dom"/>
</dbReference>
<dbReference type="InterPro" id="IPR036893">
    <property type="entry name" value="SBP_sf"/>
</dbReference>
<dbReference type="PANTHER" id="PTHR31251">
    <property type="entry name" value="SQUAMOSA PROMOTER-BINDING-LIKE PROTEIN 4"/>
    <property type="match status" value="1"/>
</dbReference>
<dbReference type="PANTHER" id="PTHR31251:SF106">
    <property type="entry name" value="SQUAMOSA PROMOTER-BINDING-LIKE PROTEIN 4"/>
    <property type="match status" value="1"/>
</dbReference>
<dbReference type="Pfam" id="PF03110">
    <property type="entry name" value="SBP"/>
    <property type="match status" value="1"/>
</dbReference>
<dbReference type="SUPFAM" id="SSF103612">
    <property type="entry name" value="SBT domain"/>
    <property type="match status" value="1"/>
</dbReference>
<dbReference type="PROSITE" id="PS51141">
    <property type="entry name" value="ZF_SBP"/>
    <property type="match status" value="1"/>
</dbReference>
<gene>
    <name type="primary">SPL2</name>
    <name type="ordered locus">Os01g0922600</name>
    <name type="ordered locus">LOC_Os01g69830</name>
    <name type="ORF">B1455F06.12</name>
    <name type="ORF">OsJ_004487</name>
</gene>
<proteinExistence type="evidence at transcript level"/>
<name>SPL2_ORYSJ</name>